<comment type="function">
    <text evidence="1">Molecular chaperone. Has ATPase activity.</text>
</comment>
<comment type="subunit">
    <text evidence="1">Homodimer.</text>
</comment>
<comment type="subcellular location">
    <subcellularLocation>
        <location evidence="1">Cytoplasm</location>
    </subcellularLocation>
</comment>
<comment type="similarity">
    <text evidence="1">Belongs to the heat shock protein 90 family.</text>
</comment>
<protein>
    <recommendedName>
        <fullName evidence="1">Chaperone protein HtpG</fullName>
    </recommendedName>
    <alternativeName>
        <fullName evidence="1">Heat shock protein HtpG</fullName>
    </alternativeName>
    <alternativeName>
        <fullName evidence="1">High temperature protein G</fullName>
    </alternativeName>
</protein>
<keyword id="KW-0067">ATP-binding</keyword>
<keyword id="KW-0143">Chaperone</keyword>
<keyword id="KW-0963">Cytoplasm</keyword>
<keyword id="KW-0547">Nucleotide-binding</keyword>
<keyword id="KW-0346">Stress response</keyword>
<organism>
    <name type="scientific">Methylobacterium sp. (strain 4-46)</name>
    <dbReference type="NCBI Taxonomy" id="426117"/>
    <lineage>
        <taxon>Bacteria</taxon>
        <taxon>Pseudomonadati</taxon>
        <taxon>Pseudomonadota</taxon>
        <taxon>Alphaproteobacteria</taxon>
        <taxon>Hyphomicrobiales</taxon>
        <taxon>Methylobacteriaceae</taxon>
        <taxon>Methylobacterium</taxon>
    </lineage>
</organism>
<accession>B0UN89</accession>
<evidence type="ECO:0000255" key="1">
    <source>
        <dbReference type="HAMAP-Rule" id="MF_00505"/>
    </source>
</evidence>
<gene>
    <name evidence="1" type="primary">htpG</name>
    <name type="ordered locus">M446_0044</name>
</gene>
<proteinExistence type="inferred from homology"/>
<dbReference type="EMBL" id="CP000943">
    <property type="protein sequence ID" value="ACA14632.1"/>
    <property type="molecule type" value="Genomic_DNA"/>
</dbReference>
<dbReference type="RefSeq" id="WP_012330050.1">
    <property type="nucleotide sequence ID" value="NC_010511.1"/>
</dbReference>
<dbReference type="SMR" id="B0UN89"/>
<dbReference type="STRING" id="426117.M446_0044"/>
<dbReference type="KEGG" id="met:M446_0044"/>
<dbReference type="eggNOG" id="COG0326">
    <property type="taxonomic scope" value="Bacteria"/>
</dbReference>
<dbReference type="HOGENOM" id="CLU_006684_3_0_5"/>
<dbReference type="GO" id="GO:0005737">
    <property type="term" value="C:cytoplasm"/>
    <property type="evidence" value="ECO:0007669"/>
    <property type="project" value="UniProtKB-SubCell"/>
</dbReference>
<dbReference type="GO" id="GO:0005524">
    <property type="term" value="F:ATP binding"/>
    <property type="evidence" value="ECO:0007669"/>
    <property type="project" value="UniProtKB-UniRule"/>
</dbReference>
<dbReference type="GO" id="GO:0016887">
    <property type="term" value="F:ATP hydrolysis activity"/>
    <property type="evidence" value="ECO:0007669"/>
    <property type="project" value="InterPro"/>
</dbReference>
<dbReference type="GO" id="GO:0140662">
    <property type="term" value="F:ATP-dependent protein folding chaperone"/>
    <property type="evidence" value="ECO:0007669"/>
    <property type="project" value="InterPro"/>
</dbReference>
<dbReference type="GO" id="GO:0051082">
    <property type="term" value="F:unfolded protein binding"/>
    <property type="evidence" value="ECO:0007669"/>
    <property type="project" value="UniProtKB-UniRule"/>
</dbReference>
<dbReference type="CDD" id="cd16927">
    <property type="entry name" value="HATPase_Hsp90-like"/>
    <property type="match status" value="1"/>
</dbReference>
<dbReference type="FunFam" id="3.30.565.10:FF:000357">
    <property type="entry name" value="Heat shock protein HSP 90-beta"/>
    <property type="match status" value="1"/>
</dbReference>
<dbReference type="Gene3D" id="3.30.230.80">
    <property type="match status" value="1"/>
</dbReference>
<dbReference type="Gene3D" id="3.40.50.11260">
    <property type="match status" value="1"/>
</dbReference>
<dbReference type="Gene3D" id="1.20.120.790">
    <property type="entry name" value="Heat shock protein 90, C-terminal domain"/>
    <property type="match status" value="1"/>
</dbReference>
<dbReference type="Gene3D" id="3.30.565.10">
    <property type="entry name" value="Histidine kinase-like ATPase, C-terminal domain"/>
    <property type="match status" value="1"/>
</dbReference>
<dbReference type="HAMAP" id="MF_00505">
    <property type="entry name" value="HSP90"/>
    <property type="match status" value="1"/>
</dbReference>
<dbReference type="InterPro" id="IPR036890">
    <property type="entry name" value="HATPase_C_sf"/>
</dbReference>
<dbReference type="InterPro" id="IPR037196">
    <property type="entry name" value="HSP90_C"/>
</dbReference>
<dbReference type="InterPro" id="IPR001404">
    <property type="entry name" value="Hsp90_fam"/>
</dbReference>
<dbReference type="InterPro" id="IPR020575">
    <property type="entry name" value="Hsp90_N"/>
</dbReference>
<dbReference type="InterPro" id="IPR020568">
    <property type="entry name" value="Ribosomal_Su5_D2-typ_SF"/>
</dbReference>
<dbReference type="NCBIfam" id="NF003555">
    <property type="entry name" value="PRK05218.1"/>
    <property type="match status" value="1"/>
</dbReference>
<dbReference type="PANTHER" id="PTHR11528">
    <property type="entry name" value="HEAT SHOCK PROTEIN 90 FAMILY MEMBER"/>
    <property type="match status" value="1"/>
</dbReference>
<dbReference type="Pfam" id="PF13589">
    <property type="entry name" value="HATPase_c_3"/>
    <property type="match status" value="1"/>
</dbReference>
<dbReference type="Pfam" id="PF00183">
    <property type="entry name" value="HSP90"/>
    <property type="match status" value="1"/>
</dbReference>
<dbReference type="PIRSF" id="PIRSF002583">
    <property type="entry name" value="Hsp90"/>
    <property type="match status" value="1"/>
</dbReference>
<dbReference type="PRINTS" id="PR00775">
    <property type="entry name" value="HEATSHOCK90"/>
</dbReference>
<dbReference type="SMART" id="SM00387">
    <property type="entry name" value="HATPase_c"/>
    <property type="match status" value="1"/>
</dbReference>
<dbReference type="SUPFAM" id="SSF55874">
    <property type="entry name" value="ATPase domain of HSP90 chaperone/DNA topoisomerase II/histidine kinase"/>
    <property type="match status" value="1"/>
</dbReference>
<dbReference type="SUPFAM" id="SSF110942">
    <property type="entry name" value="HSP90 C-terminal domain"/>
    <property type="match status" value="1"/>
</dbReference>
<dbReference type="SUPFAM" id="SSF54211">
    <property type="entry name" value="Ribosomal protein S5 domain 2-like"/>
    <property type="match status" value="1"/>
</dbReference>
<feature type="chain" id="PRO_1000127032" description="Chaperone protein HtpG">
    <location>
        <begin position="1"/>
        <end position="611"/>
    </location>
</feature>
<feature type="region of interest" description="A; substrate-binding" evidence="1">
    <location>
        <begin position="1"/>
        <end position="326"/>
    </location>
</feature>
<feature type="region of interest" description="B" evidence="1">
    <location>
        <begin position="327"/>
        <end position="536"/>
    </location>
</feature>
<feature type="region of interest" description="C" evidence="1">
    <location>
        <begin position="537"/>
        <end position="611"/>
    </location>
</feature>
<name>HTPG_METS4</name>
<reference key="1">
    <citation type="submission" date="2008-02" db="EMBL/GenBank/DDBJ databases">
        <title>Complete sequence of chromosome of Methylobacterium sp. 4-46.</title>
        <authorList>
            <consortium name="US DOE Joint Genome Institute"/>
            <person name="Copeland A."/>
            <person name="Lucas S."/>
            <person name="Lapidus A."/>
            <person name="Glavina del Rio T."/>
            <person name="Dalin E."/>
            <person name="Tice H."/>
            <person name="Bruce D."/>
            <person name="Goodwin L."/>
            <person name="Pitluck S."/>
            <person name="Chertkov O."/>
            <person name="Brettin T."/>
            <person name="Detter J.C."/>
            <person name="Han C."/>
            <person name="Kuske C.R."/>
            <person name="Schmutz J."/>
            <person name="Larimer F."/>
            <person name="Land M."/>
            <person name="Hauser L."/>
            <person name="Kyrpides N."/>
            <person name="Ivanova N."/>
            <person name="Marx C.J."/>
            <person name="Richardson P."/>
        </authorList>
    </citation>
    <scope>NUCLEOTIDE SEQUENCE [LARGE SCALE GENOMIC DNA]</scope>
    <source>
        <strain>4-46</strain>
    </source>
</reference>
<sequence length="611" mass="67209">MSETLERHAFGAEVGRLLDLVVHALYSEREIFLRELVANAADAVDRRRFGALTDPALSLPADAKVRIRPDKAARTLAISDPGIGMSKEDLAQNLGTIARSGTRAFSQSLADAKPDERPSLIGQFGVGFYSAFMVADRVEVTSRKAGSDEAWTWASEGQGEYTLSPATRAEPGTDVVLHIKADADEYLEPLRLETIVRKWADHITVPITLLRDGEEVSGNEGTALWRKPKSEVSEEAYTAFYRHVTHNFDAPWATLHWRAEGALDFTALLFIPGMKPFLAVEEERESRVRLHVRRMFITDEAGLLPSWLRFVQGVVDTEDLPLNVSREMLQATPVLARIRRAVTGKVMAELKSRAKDAESYATFWQAFGPVLKEGIWEDAEHRDDIAALLRFRSTAVEGWTSFADYVSRMKPNQEAIYILVGDDAAALARSAQIEGFRARGIEVLLLSDHVDAFWPERLDKFDGKPIRSITQSADDLSAFAPEGEAAGEAADLTELLPKLKEILKDDVAEVRASQRLVESAVLLSASSGGPDLQMQRLLRRAGRGFGAGLPVLELNPRHALVRRIAERARAGEDVGEAAQTLLDLAHVQGGDPPRDPVAFARRVAAALAAQA</sequence>